<accession>Q05493</accession>
<reference key="1">
    <citation type="journal article" date="1993" name="Eur. J. Biochem.">
        <title>Structure and metabolic control of the Yarrowia lipolytica peroxisomal 3-oxoacyl-CoA-thiolase gene.</title>
        <authorList>
            <person name="Berninger G."/>
            <person name="Schmidtchen R."/>
            <person name="Casel G."/>
            <person name="Knoerr A."/>
            <person name="Rautenstrauss K."/>
            <person name="Kunau W.-H."/>
            <person name="Schweizer E."/>
        </authorList>
    </citation>
    <scope>NUCLEOTIDE SEQUENCE [GENOMIC DNA]</scope>
    <scope>DISRUPTION PHENOTYPE</scope>
</reference>
<reference key="2">
    <citation type="journal article" date="2004" name="Nature">
        <title>Genome evolution in yeasts.</title>
        <authorList>
            <person name="Dujon B."/>
            <person name="Sherman D."/>
            <person name="Fischer G."/>
            <person name="Durrens P."/>
            <person name="Casaregola S."/>
            <person name="Lafontaine I."/>
            <person name="de Montigny J."/>
            <person name="Marck C."/>
            <person name="Neuveglise C."/>
            <person name="Talla E."/>
            <person name="Goffard N."/>
            <person name="Frangeul L."/>
            <person name="Aigle M."/>
            <person name="Anthouard V."/>
            <person name="Babour A."/>
            <person name="Barbe V."/>
            <person name="Barnay S."/>
            <person name="Blanchin S."/>
            <person name="Beckerich J.-M."/>
            <person name="Beyne E."/>
            <person name="Bleykasten C."/>
            <person name="Boisrame A."/>
            <person name="Boyer J."/>
            <person name="Cattolico L."/>
            <person name="Confanioleri F."/>
            <person name="de Daruvar A."/>
            <person name="Despons L."/>
            <person name="Fabre E."/>
            <person name="Fairhead C."/>
            <person name="Ferry-Dumazet H."/>
            <person name="Groppi A."/>
            <person name="Hantraye F."/>
            <person name="Hennequin C."/>
            <person name="Jauniaux N."/>
            <person name="Joyet P."/>
            <person name="Kachouri R."/>
            <person name="Kerrest A."/>
            <person name="Koszul R."/>
            <person name="Lemaire M."/>
            <person name="Lesur I."/>
            <person name="Ma L."/>
            <person name="Muller H."/>
            <person name="Nicaud J.-M."/>
            <person name="Nikolski M."/>
            <person name="Oztas S."/>
            <person name="Ozier-Kalogeropoulos O."/>
            <person name="Pellenz S."/>
            <person name="Potier S."/>
            <person name="Richard G.-F."/>
            <person name="Straub M.-L."/>
            <person name="Suleau A."/>
            <person name="Swennen D."/>
            <person name="Tekaia F."/>
            <person name="Wesolowski-Louvel M."/>
            <person name="Westhof E."/>
            <person name="Wirth B."/>
            <person name="Zeniou-Meyer M."/>
            <person name="Zivanovic Y."/>
            <person name="Bolotin-Fukuhara M."/>
            <person name="Thierry A."/>
            <person name="Bouchier C."/>
            <person name="Caudron B."/>
            <person name="Scarpelli C."/>
            <person name="Gaillardin C."/>
            <person name="Weissenbach J."/>
            <person name="Wincker P."/>
            <person name="Souciet J.-L."/>
        </authorList>
    </citation>
    <scope>NUCLEOTIDE SEQUENCE [LARGE SCALE GENOMIC DNA]</scope>
    <source>
        <strain>CLIB 122 / E 150</strain>
    </source>
</reference>
<keyword id="KW-0012">Acyltransferase</keyword>
<keyword id="KW-0276">Fatty acid metabolism</keyword>
<keyword id="KW-0443">Lipid metabolism</keyword>
<keyword id="KW-0576">Peroxisome</keyword>
<keyword id="KW-1185">Reference proteome</keyword>
<keyword id="KW-0808">Transferase</keyword>
<keyword id="KW-0809">Transit peptide</keyword>
<feature type="transit peptide" description="Peroxisome" evidence="2">
    <location>
        <begin position="1"/>
        <end position="9"/>
    </location>
</feature>
<feature type="chain" id="PRO_0000034077" description="3-ketoacyl-CoA thiolase, peroxisomal">
    <location>
        <begin position="10"/>
        <end position="414"/>
    </location>
</feature>
<feature type="region of interest" description="PTS2-type peroxisomal targeting signal" evidence="2">
    <location>
        <begin position="1"/>
        <end position="9"/>
    </location>
</feature>
<feature type="active site" description="Acyl-thioester intermediate" evidence="1">
    <location>
        <position position="115"/>
    </location>
</feature>
<feature type="active site" description="Proton acceptor" evidence="3">
    <location>
        <position position="370"/>
    </location>
</feature>
<feature type="active site" description="Proton acceptor" evidence="3">
    <location>
        <position position="400"/>
    </location>
</feature>
<sequence>MDRLNNLATQLEQNPAKGLDAITSKNPDDVVITAAYRTAHTKGGKGLFKDTSSSELLASLLEGLVKESKIDPKLIGDVVCGNVLAAGAGATEHRAACLVAGIPETVPFVALNRQCSSGLMAVNDVANKIRAGQIDIGIGCGVESMSNQYGPNSVTPFSNKFQNNEEAKKCLIPMGITSENVAAKYNVSRKAQDAFAAKSYEKAAAAQAAGKFDQEILPIKTTVLDDDDNEKEVTVNKDDGIRPGVTAEKLGKLKPAFSAEGTTHAGNASQISDGAGAVLLMRRSVAEKLGQPILAKFVHCKTVGVPPELMGIGPAYAIPAVLEDLGLTVNDVDVFEINEAFASQALFSIQHCGIDESKVNPRGGAIAIGHPLGATGARQFATLLSELKESGKKVGVTSMCIGTGMGAASLVVAE</sequence>
<proteinExistence type="inferred from homology"/>
<dbReference type="EC" id="2.3.1.16" evidence="2"/>
<dbReference type="EMBL" id="X69988">
    <property type="protein sequence ID" value="CAA49605.1"/>
    <property type="molecule type" value="Genomic_DNA"/>
</dbReference>
<dbReference type="EMBL" id="CR382131">
    <property type="protein sequence ID" value="CAG79704.1"/>
    <property type="molecule type" value="Genomic_DNA"/>
</dbReference>
<dbReference type="PIR" id="S36838">
    <property type="entry name" value="S36838"/>
</dbReference>
<dbReference type="RefSeq" id="XP_504109.1">
    <property type="nucleotide sequence ID" value="XM_504109.1"/>
</dbReference>
<dbReference type="SMR" id="Q05493"/>
<dbReference type="FunCoup" id="Q05493">
    <property type="interactions" value="351"/>
</dbReference>
<dbReference type="STRING" id="284591.Q05493"/>
<dbReference type="EnsemblFungi" id="CAG79704">
    <property type="protein sequence ID" value="CAG79704"/>
    <property type="gene ID" value="YALI0_E18568g"/>
</dbReference>
<dbReference type="KEGG" id="yli:2912002"/>
<dbReference type="VEuPathDB" id="FungiDB:YALI0_E18568g"/>
<dbReference type="HOGENOM" id="CLU_031026_1_1_1"/>
<dbReference type="InParanoid" id="Q05493"/>
<dbReference type="OMA" id="MTAFPEP"/>
<dbReference type="OrthoDB" id="113634at4891"/>
<dbReference type="UniPathway" id="UPA00199"/>
<dbReference type="Proteomes" id="UP000001300">
    <property type="component" value="Chromosome E"/>
</dbReference>
<dbReference type="GO" id="GO:0005777">
    <property type="term" value="C:peroxisome"/>
    <property type="evidence" value="ECO:0000318"/>
    <property type="project" value="GO_Central"/>
</dbReference>
<dbReference type="GO" id="GO:0003988">
    <property type="term" value="F:acetyl-CoA C-acyltransferase activity"/>
    <property type="evidence" value="ECO:0000318"/>
    <property type="project" value="GO_Central"/>
</dbReference>
<dbReference type="GO" id="GO:0006635">
    <property type="term" value="P:fatty acid beta-oxidation"/>
    <property type="evidence" value="ECO:0000318"/>
    <property type="project" value="GO_Central"/>
</dbReference>
<dbReference type="GO" id="GO:0010124">
    <property type="term" value="P:phenylacetate catabolic process"/>
    <property type="evidence" value="ECO:0000318"/>
    <property type="project" value="GO_Central"/>
</dbReference>
<dbReference type="CDD" id="cd00751">
    <property type="entry name" value="thiolase"/>
    <property type="match status" value="1"/>
</dbReference>
<dbReference type="FunFam" id="3.40.47.10:FF:000010">
    <property type="entry name" value="Acetyl-CoA acetyltransferase (Thiolase)"/>
    <property type="match status" value="1"/>
</dbReference>
<dbReference type="Gene3D" id="3.40.47.10">
    <property type="match status" value="2"/>
</dbReference>
<dbReference type="InterPro" id="IPR002155">
    <property type="entry name" value="Thiolase"/>
</dbReference>
<dbReference type="InterPro" id="IPR016039">
    <property type="entry name" value="Thiolase-like"/>
</dbReference>
<dbReference type="InterPro" id="IPR050215">
    <property type="entry name" value="Thiolase-like_sf_Thiolase"/>
</dbReference>
<dbReference type="InterPro" id="IPR020615">
    <property type="entry name" value="Thiolase_acyl_enz_int_AS"/>
</dbReference>
<dbReference type="InterPro" id="IPR020610">
    <property type="entry name" value="Thiolase_AS"/>
</dbReference>
<dbReference type="InterPro" id="IPR020617">
    <property type="entry name" value="Thiolase_C"/>
</dbReference>
<dbReference type="InterPro" id="IPR020613">
    <property type="entry name" value="Thiolase_CS"/>
</dbReference>
<dbReference type="InterPro" id="IPR020616">
    <property type="entry name" value="Thiolase_N"/>
</dbReference>
<dbReference type="NCBIfam" id="TIGR01930">
    <property type="entry name" value="AcCoA-C-Actrans"/>
    <property type="match status" value="1"/>
</dbReference>
<dbReference type="PANTHER" id="PTHR43853">
    <property type="entry name" value="3-KETOACYL-COA THIOLASE, PEROXISOMAL"/>
    <property type="match status" value="1"/>
</dbReference>
<dbReference type="PANTHER" id="PTHR43853:SF8">
    <property type="entry name" value="3-KETOACYL-COA THIOLASE, PEROXISOMAL"/>
    <property type="match status" value="1"/>
</dbReference>
<dbReference type="Pfam" id="PF02803">
    <property type="entry name" value="Thiolase_C"/>
    <property type="match status" value="1"/>
</dbReference>
<dbReference type="Pfam" id="PF00108">
    <property type="entry name" value="Thiolase_N"/>
    <property type="match status" value="1"/>
</dbReference>
<dbReference type="PIRSF" id="PIRSF000429">
    <property type="entry name" value="Ac-CoA_Ac_transf"/>
    <property type="match status" value="1"/>
</dbReference>
<dbReference type="SUPFAM" id="SSF53901">
    <property type="entry name" value="Thiolase-like"/>
    <property type="match status" value="2"/>
</dbReference>
<dbReference type="PROSITE" id="PS00098">
    <property type="entry name" value="THIOLASE_1"/>
    <property type="match status" value="1"/>
</dbReference>
<dbReference type="PROSITE" id="PS00737">
    <property type="entry name" value="THIOLASE_2"/>
    <property type="match status" value="1"/>
</dbReference>
<dbReference type="PROSITE" id="PS00099">
    <property type="entry name" value="THIOLASE_3"/>
    <property type="match status" value="1"/>
</dbReference>
<name>THIK_YARLI</name>
<gene>
    <name type="primary">POT1</name>
    <name type="ordered locus">YALI0E18568g</name>
</gene>
<evidence type="ECO:0000250" key="1"/>
<evidence type="ECO:0000250" key="2">
    <source>
        <dbReference type="UniProtKB" id="P27796"/>
    </source>
</evidence>
<evidence type="ECO:0000255" key="3">
    <source>
        <dbReference type="PROSITE-ProRule" id="PRU10020"/>
    </source>
</evidence>
<evidence type="ECO:0000269" key="4">
    <source>
    </source>
</evidence>
<evidence type="ECO:0000305" key="5"/>
<comment type="function">
    <text evidence="2">Responsible for the thiolytic cleavage of straight chain 3-keto fatty acyl-CoAs (3-oxoacyl-CoAs).</text>
</comment>
<comment type="catalytic activity">
    <reaction evidence="2">
        <text>an acyl-CoA + acetyl-CoA = a 3-oxoacyl-CoA + CoA</text>
        <dbReference type="Rhea" id="RHEA:21564"/>
        <dbReference type="ChEBI" id="CHEBI:57287"/>
        <dbReference type="ChEBI" id="CHEBI:57288"/>
        <dbReference type="ChEBI" id="CHEBI:58342"/>
        <dbReference type="ChEBI" id="CHEBI:90726"/>
        <dbReference type="EC" id="2.3.1.16"/>
    </reaction>
</comment>
<comment type="pathway">
    <text evidence="2">Lipid metabolism; fatty acid metabolism.</text>
</comment>
<comment type="subunit">
    <text evidence="2">Homodimer. Interacts (via PTS2-type peroxisomal targeting signal region) with PEX7; leading to its translocation into peroxisomes.</text>
</comment>
<comment type="subcellular location">
    <subcellularLocation>
        <location evidence="2">Peroxisome</location>
    </subcellularLocation>
</comment>
<comment type="domain">
    <text evidence="2">The PTS2-type peroxisomal targeting signal, which mediates interaction with PEX7 and localization to peroxisomes, is cleaved following import into peroxisomes.</text>
</comment>
<comment type="disruption phenotype">
    <text evidence="4">Cells are unable to grow on solid media with oleate as a carbon source.</text>
</comment>
<comment type="similarity">
    <text evidence="5">Belongs to the thiolase-like superfamily. Thiolase family.</text>
</comment>
<protein>
    <recommendedName>
        <fullName>3-ketoacyl-CoA thiolase, peroxisomal</fullName>
        <ecNumber evidence="2">2.3.1.16</ecNumber>
    </recommendedName>
    <alternativeName>
        <fullName>Acetyl-CoA acyltransferase</fullName>
    </alternativeName>
    <alternativeName>
        <fullName>Beta-ketothiolase</fullName>
    </alternativeName>
    <alternativeName>
        <fullName>Peroxisomal 3-oxoacyl-CoA thiolase</fullName>
    </alternativeName>
</protein>
<organism>
    <name type="scientific">Yarrowia lipolytica (strain CLIB 122 / E 150)</name>
    <name type="common">Yeast</name>
    <name type="synonym">Candida lipolytica</name>
    <dbReference type="NCBI Taxonomy" id="284591"/>
    <lineage>
        <taxon>Eukaryota</taxon>
        <taxon>Fungi</taxon>
        <taxon>Dikarya</taxon>
        <taxon>Ascomycota</taxon>
        <taxon>Saccharomycotina</taxon>
        <taxon>Dipodascomycetes</taxon>
        <taxon>Dipodascales</taxon>
        <taxon>Dipodascales incertae sedis</taxon>
        <taxon>Yarrowia</taxon>
    </lineage>
</organism>